<evidence type="ECO:0000255" key="1">
    <source>
        <dbReference type="HAMAP-Rule" id="MF_01321"/>
    </source>
</evidence>
<name>RPOB_EUGLO</name>
<sequence length="1076" mass="124363">MINRLKTYSNLLNIQSKSFKNFLKIGIINELKKIQKIIHSNFEINFHINALKYKKPKLSSESCLIKNETYNIDIKIPMEIKYEGKIIFKKKYISFCKIPFMTEKGTFICNGNTRIIINQLIRSPGIYIKKKKNCLLATLIPKTGSWITIKRNKKKENFIKIDKINNSIPLFTFLNILGLSKKKITLSLNKNNYSKNFKISKKKKIEIPTINLTQLSKENNIKTIRNNLYNRFLNSDNYNLGDTGRFKINKKIYKTEFFTNKKILMPEDFLGIFNYMIKIKNINIKSNKIDDLKNKIVLSVGELMQNKFNNIIKDIYTKIIEKINKFEQKKKQEEKYNKEKKEEKIKINKTYFINSKNLTDNIKKFITTNPLSQLLNDLNPLSELTHKRKISTLGIGGIEKNKASTKIREIHNSHYGRICPIETSEGKNAGLVLSLAKDIRINKHGFIESPFYKVIKGNIKKNKGIFFISSENEKNIKIAPCDILKNFKLNKNYGVKNKNEFYYDSYKSINFISTSTDQFNSIGTGIIPFLEHNDANRVLMGATMQKQALILKNKEPSLIETGREILINRDSKSTIIAKESGTVIYSSSKKIIIQKKSKKSKFKNINLFKKYFKKKLKKNKKIKKHKHTIYLLNIDEKNNSNIYQTRTSIVKKNDWIKKGQIIAEGIGSLNGNLCLGKNILVGYLSWEGYNFEDAIIISERLRNEDILTSIHVKKCKSFLINHKEKKEEITKNIPDIKLKNVKNLNNNGIIKIGSKINGKEILIGIIKKRLINYEVELIYEILSEYERKNISVLSPKNLVGIVTNTKIHKIKNCYQIEIYITEKKKIQIGDKLSGRHGNKGVISKIIPIVDMPYLPDGTPIDIILNPLGIPSRMNVGQIYECLLNLSAINLKERYKIQPFDEYQYKNNSEILIYKKLNQSRKKTKKEWLFNPNNPGKTILFNGKNGKPFKQTISFGYSYILKLMHIAEEKIHAKTISNYSSIIKQPVKGKSKNGGQRFGEMEVWAIEGFGAAFLLQELLTIKSDDLHNKSQILKNLMNGLSMSKPNVPESFKLLILELQSLGLNINIFTKKKTLFTK</sequence>
<keyword id="KW-0240">DNA-directed RNA polymerase</keyword>
<keyword id="KW-0548">Nucleotidyltransferase</keyword>
<keyword id="KW-0934">Plastid</keyword>
<keyword id="KW-0804">Transcription</keyword>
<keyword id="KW-0808">Transferase</keyword>
<organism>
    <name type="scientific">Euglena longa</name>
    <name type="common">Euglenophycean alga</name>
    <name type="synonym">Astasia longa</name>
    <dbReference type="NCBI Taxonomy" id="3037"/>
    <lineage>
        <taxon>Eukaryota</taxon>
        <taxon>Discoba</taxon>
        <taxon>Euglenozoa</taxon>
        <taxon>Euglenida</taxon>
        <taxon>Spirocuta</taxon>
        <taxon>Euglenophyceae</taxon>
        <taxon>Euglenales</taxon>
        <taxon>Euglenaceae</taxon>
        <taxon>Euglena</taxon>
    </lineage>
</organism>
<gene>
    <name evidence="1" type="primary">rpoB</name>
</gene>
<geneLocation type="non-photosynthetic plastid"/>
<feature type="chain" id="PRO_0000048012" description="DNA-directed RNA polymerase subunit beta">
    <location>
        <begin position="1"/>
        <end position="1076"/>
    </location>
</feature>
<dbReference type="EC" id="2.7.7.6" evidence="1"/>
<dbReference type="EMBL" id="AJ294725">
    <property type="protein sequence ID" value="CAC24573.1"/>
    <property type="molecule type" value="Genomic_DNA"/>
</dbReference>
<dbReference type="PIR" id="S23207">
    <property type="entry name" value="S23207"/>
</dbReference>
<dbReference type="RefSeq" id="NP_074962.1">
    <property type="nucleotide sequence ID" value="NC_002652.1"/>
</dbReference>
<dbReference type="SMR" id="P27059"/>
<dbReference type="GeneID" id="1457304"/>
<dbReference type="GO" id="GO:0000428">
    <property type="term" value="C:DNA-directed RNA polymerase complex"/>
    <property type="evidence" value="ECO:0007669"/>
    <property type="project" value="UniProtKB-KW"/>
</dbReference>
<dbReference type="GO" id="GO:0005739">
    <property type="term" value="C:mitochondrion"/>
    <property type="evidence" value="ECO:0007669"/>
    <property type="project" value="GOC"/>
</dbReference>
<dbReference type="GO" id="GO:0009536">
    <property type="term" value="C:plastid"/>
    <property type="evidence" value="ECO:0007669"/>
    <property type="project" value="UniProtKB-SubCell"/>
</dbReference>
<dbReference type="GO" id="GO:0003677">
    <property type="term" value="F:DNA binding"/>
    <property type="evidence" value="ECO:0007669"/>
    <property type="project" value="UniProtKB-UniRule"/>
</dbReference>
<dbReference type="GO" id="GO:0003899">
    <property type="term" value="F:DNA-directed RNA polymerase activity"/>
    <property type="evidence" value="ECO:0007669"/>
    <property type="project" value="UniProtKB-UniRule"/>
</dbReference>
<dbReference type="GO" id="GO:0032549">
    <property type="term" value="F:ribonucleoside binding"/>
    <property type="evidence" value="ECO:0007669"/>
    <property type="project" value="InterPro"/>
</dbReference>
<dbReference type="GO" id="GO:0006351">
    <property type="term" value="P:DNA-templated transcription"/>
    <property type="evidence" value="ECO:0007669"/>
    <property type="project" value="UniProtKB-UniRule"/>
</dbReference>
<dbReference type="CDD" id="cd00653">
    <property type="entry name" value="RNA_pol_B_RPB2"/>
    <property type="match status" value="1"/>
</dbReference>
<dbReference type="Gene3D" id="2.40.50.100">
    <property type="match status" value="1"/>
</dbReference>
<dbReference type="Gene3D" id="2.40.50.150">
    <property type="match status" value="1"/>
</dbReference>
<dbReference type="Gene3D" id="3.90.1100.10">
    <property type="match status" value="1"/>
</dbReference>
<dbReference type="Gene3D" id="2.30.150.10">
    <property type="entry name" value="DNA-directed RNA polymerase, beta subunit, external 1 domain"/>
    <property type="match status" value="1"/>
</dbReference>
<dbReference type="Gene3D" id="2.40.270.10">
    <property type="entry name" value="DNA-directed RNA polymerase, subunit 2, domain 6"/>
    <property type="match status" value="2"/>
</dbReference>
<dbReference type="Gene3D" id="3.90.1800.10">
    <property type="entry name" value="RNA polymerase alpha subunit dimerisation domain"/>
    <property type="match status" value="1"/>
</dbReference>
<dbReference type="Gene3D" id="3.90.1110.10">
    <property type="entry name" value="RNA polymerase Rpb2, domain 2"/>
    <property type="match status" value="1"/>
</dbReference>
<dbReference type="HAMAP" id="MF_01321">
    <property type="entry name" value="RNApol_bact_RpoB"/>
    <property type="match status" value="1"/>
</dbReference>
<dbReference type="InterPro" id="IPR042107">
    <property type="entry name" value="DNA-dir_RNA_pol_bsu_ext_1_sf"/>
</dbReference>
<dbReference type="InterPro" id="IPR015712">
    <property type="entry name" value="DNA-dir_RNA_pol_su2"/>
</dbReference>
<dbReference type="InterPro" id="IPR007120">
    <property type="entry name" value="DNA-dir_RNAP_su2_dom"/>
</dbReference>
<dbReference type="InterPro" id="IPR037033">
    <property type="entry name" value="DNA-dir_RNAP_su2_hyb_sf"/>
</dbReference>
<dbReference type="InterPro" id="IPR010243">
    <property type="entry name" value="RNA_pol_bsu_bac"/>
</dbReference>
<dbReference type="InterPro" id="IPR007121">
    <property type="entry name" value="RNA_pol_bsu_CS"/>
</dbReference>
<dbReference type="InterPro" id="IPR037034">
    <property type="entry name" value="RNA_pol_Rpb2_2_sf"/>
</dbReference>
<dbReference type="InterPro" id="IPR007645">
    <property type="entry name" value="RNA_pol_Rpb2_3"/>
</dbReference>
<dbReference type="InterPro" id="IPR007641">
    <property type="entry name" value="RNA_pol_Rpb2_7"/>
</dbReference>
<dbReference type="InterPro" id="IPR014724">
    <property type="entry name" value="RNA_pol_RPB2_OB-fold"/>
</dbReference>
<dbReference type="PANTHER" id="PTHR20856">
    <property type="entry name" value="DNA-DIRECTED RNA POLYMERASE I SUBUNIT 2"/>
    <property type="match status" value="1"/>
</dbReference>
<dbReference type="Pfam" id="PF04565">
    <property type="entry name" value="RNA_pol_Rpb2_3"/>
    <property type="match status" value="1"/>
</dbReference>
<dbReference type="Pfam" id="PF00562">
    <property type="entry name" value="RNA_pol_Rpb2_6"/>
    <property type="match status" value="1"/>
</dbReference>
<dbReference type="Pfam" id="PF04560">
    <property type="entry name" value="RNA_pol_Rpb2_7"/>
    <property type="match status" value="1"/>
</dbReference>
<dbReference type="SUPFAM" id="SSF64484">
    <property type="entry name" value="beta and beta-prime subunits of DNA dependent RNA-polymerase"/>
    <property type="match status" value="1"/>
</dbReference>
<dbReference type="PROSITE" id="PS01166">
    <property type="entry name" value="RNA_POL_BETA"/>
    <property type="match status" value="1"/>
</dbReference>
<protein>
    <recommendedName>
        <fullName evidence="1">DNA-directed RNA polymerase subunit beta</fullName>
        <ecNumber evidence="1">2.7.7.6</ecNumber>
    </recommendedName>
    <alternativeName>
        <fullName evidence="1">PEP</fullName>
    </alternativeName>
    <alternativeName>
        <fullName evidence="1">Plastid-encoded RNA polymerase subunit beta</fullName>
        <shortName evidence="1">RNA polymerase subunit beta</shortName>
    </alternativeName>
</protein>
<reference key="1">
    <citation type="journal article" date="2000" name="Protist">
        <title>Complete gene map of the plastid genome of the nonphotosynthetic euglenoid flagellate Astasia longa.</title>
        <authorList>
            <person name="Gockel G."/>
            <person name="Hachtel W."/>
        </authorList>
    </citation>
    <scope>NUCLEOTIDE SEQUENCE [LARGE SCALE GENOMIC DNA]</scope>
    <source>
        <strain>CCAP 1204-17a</strain>
    </source>
</reference>
<reference key="2">
    <citation type="journal article" date="1990" name="Curr. Genet.">
        <title>Genes for ribosomal proteins are retained on the 73 kb DNA from Astasia longa that resembles Euglena chloroplast DNA.</title>
        <authorList>
            <person name="Siemeister G."/>
            <person name="Buchholz C."/>
            <person name="Hachtel W."/>
        </authorList>
    </citation>
    <scope>PRELIMINARY NUCLEOTIDE SEQUENCE OF 1-524</scope>
    <source>
        <strain>CCAP 1204-17a</strain>
    </source>
</reference>
<reference key="3">
    <citation type="journal article" date="1994" name="Curr. Genet.">
        <title>Genes for components of the chloroplast translational apparatus are conserved in the reduced 73-kb plastid DNA of the nonphotosynthetic euglenoid flagellate Astasia longa.</title>
        <authorList>
            <person name="Gockel G."/>
            <person name="Hachtel W."/>
            <person name="Baier S."/>
            <person name="Fliss C."/>
            <person name="Henke M."/>
        </authorList>
    </citation>
    <scope>SEQUENCE REVISION</scope>
    <source>
        <strain>CCAP 1204-17a</strain>
    </source>
</reference>
<accession>P27059</accession>
<comment type="function">
    <text evidence="1">DNA-dependent RNA polymerase catalyzes the transcription of DNA into RNA using the four ribonucleoside triphosphates as substrates.</text>
</comment>
<comment type="catalytic activity">
    <reaction evidence="1">
        <text>RNA(n) + a ribonucleoside 5'-triphosphate = RNA(n+1) + diphosphate</text>
        <dbReference type="Rhea" id="RHEA:21248"/>
        <dbReference type="Rhea" id="RHEA-COMP:14527"/>
        <dbReference type="Rhea" id="RHEA-COMP:17342"/>
        <dbReference type="ChEBI" id="CHEBI:33019"/>
        <dbReference type="ChEBI" id="CHEBI:61557"/>
        <dbReference type="ChEBI" id="CHEBI:140395"/>
        <dbReference type="EC" id="2.7.7.6"/>
    </reaction>
</comment>
<comment type="subunit">
    <text evidence="1">In plastids the minimal PEP RNA polymerase catalytic core is composed of four subunits: alpha, beta, beta', and beta''. When a (nuclear-encoded) sigma factor is associated with the core the holoenzyme is formed, which can initiate transcription.</text>
</comment>
<comment type="subcellular location">
    <subcellularLocation>
        <location>Plastid</location>
    </subcellularLocation>
</comment>
<comment type="similarity">
    <text evidence="1">Belongs to the RNA polymerase beta chain family.</text>
</comment>
<proteinExistence type="inferred from homology"/>